<keyword id="KW-0963">Cytoplasm</keyword>
<keyword id="KW-0238">DNA-binding</keyword>
<keyword id="KW-0275">Fatty acid biosynthesis</keyword>
<keyword id="KW-0276">Fatty acid metabolism</keyword>
<keyword id="KW-0444">Lipid biosynthesis</keyword>
<keyword id="KW-0443">Lipid metabolism</keyword>
<keyword id="KW-1185">Reference proteome</keyword>
<keyword id="KW-0678">Repressor</keyword>
<keyword id="KW-0804">Transcription</keyword>
<keyword id="KW-0805">Transcription regulation</keyword>
<proteinExistence type="inferred from homology"/>
<name>FABR_CITK8</name>
<reference key="1">
    <citation type="submission" date="2007-08" db="EMBL/GenBank/DDBJ databases">
        <authorList>
            <consortium name="The Citrobacter koseri Genome Sequencing Project"/>
            <person name="McClelland M."/>
            <person name="Sanderson E.K."/>
            <person name="Porwollik S."/>
            <person name="Spieth J."/>
            <person name="Clifton W.S."/>
            <person name="Latreille P."/>
            <person name="Courtney L."/>
            <person name="Wang C."/>
            <person name="Pepin K."/>
            <person name="Bhonagiri V."/>
            <person name="Nash W."/>
            <person name="Johnson M."/>
            <person name="Thiruvilangam P."/>
            <person name="Wilson R."/>
        </authorList>
    </citation>
    <scope>NUCLEOTIDE SEQUENCE [LARGE SCALE GENOMIC DNA]</scope>
    <source>
        <strain>ATCC BAA-895 / CDC 4225-83 / SGSC4696</strain>
    </source>
</reference>
<evidence type="ECO:0000255" key="1">
    <source>
        <dbReference type="HAMAP-Rule" id="MF_01190"/>
    </source>
</evidence>
<accession>A8AKV8</accession>
<organism>
    <name type="scientific">Citrobacter koseri (strain ATCC BAA-895 / CDC 4225-83 / SGSC4696)</name>
    <dbReference type="NCBI Taxonomy" id="290338"/>
    <lineage>
        <taxon>Bacteria</taxon>
        <taxon>Pseudomonadati</taxon>
        <taxon>Pseudomonadota</taxon>
        <taxon>Gammaproteobacteria</taxon>
        <taxon>Enterobacterales</taxon>
        <taxon>Enterobacteriaceae</taxon>
        <taxon>Citrobacter</taxon>
    </lineage>
</organism>
<dbReference type="EMBL" id="CP000822">
    <property type="protein sequence ID" value="ABV14121.1"/>
    <property type="molecule type" value="Genomic_DNA"/>
</dbReference>
<dbReference type="SMR" id="A8AKV8"/>
<dbReference type="STRING" id="290338.CKO_03029"/>
<dbReference type="KEGG" id="cko:CKO_03029"/>
<dbReference type="HOGENOM" id="CLU_081861_0_0_6"/>
<dbReference type="Proteomes" id="UP000008148">
    <property type="component" value="Chromosome"/>
</dbReference>
<dbReference type="GO" id="GO:0005737">
    <property type="term" value="C:cytoplasm"/>
    <property type="evidence" value="ECO:0007669"/>
    <property type="project" value="UniProtKB-SubCell"/>
</dbReference>
<dbReference type="GO" id="GO:0003677">
    <property type="term" value="F:DNA binding"/>
    <property type="evidence" value="ECO:0007669"/>
    <property type="project" value="UniProtKB-KW"/>
</dbReference>
<dbReference type="GO" id="GO:0003700">
    <property type="term" value="F:DNA-binding transcription factor activity"/>
    <property type="evidence" value="ECO:0007669"/>
    <property type="project" value="UniProtKB-UniRule"/>
</dbReference>
<dbReference type="GO" id="GO:0006633">
    <property type="term" value="P:fatty acid biosynthetic process"/>
    <property type="evidence" value="ECO:0007669"/>
    <property type="project" value="UniProtKB-UniRule"/>
</dbReference>
<dbReference type="GO" id="GO:0045717">
    <property type="term" value="P:negative regulation of fatty acid biosynthetic process"/>
    <property type="evidence" value="ECO:0007669"/>
    <property type="project" value="UniProtKB-UniRule"/>
</dbReference>
<dbReference type="FunFam" id="1.10.10.60:FF:000034">
    <property type="entry name" value="HTH-type transcriptional repressor FabR"/>
    <property type="match status" value="1"/>
</dbReference>
<dbReference type="FunFam" id="1.10.357.10:FF:000001">
    <property type="entry name" value="HTH-type transcriptional repressor FabR"/>
    <property type="match status" value="1"/>
</dbReference>
<dbReference type="Gene3D" id="1.10.10.60">
    <property type="entry name" value="Homeodomain-like"/>
    <property type="match status" value="1"/>
</dbReference>
<dbReference type="Gene3D" id="1.10.357.10">
    <property type="entry name" value="Tetracycline Repressor, domain 2"/>
    <property type="match status" value="1"/>
</dbReference>
<dbReference type="HAMAP" id="MF_01190">
    <property type="entry name" value="HTH_type_FabR"/>
    <property type="match status" value="1"/>
</dbReference>
<dbReference type="InterPro" id="IPR054129">
    <property type="entry name" value="DesT_TetR_C"/>
</dbReference>
<dbReference type="InterPro" id="IPR009057">
    <property type="entry name" value="Homeodomain-like_sf"/>
</dbReference>
<dbReference type="InterPro" id="IPR001647">
    <property type="entry name" value="HTH_TetR"/>
</dbReference>
<dbReference type="InterPro" id="IPR050692">
    <property type="entry name" value="HTH_transcr_repressor_FabR"/>
</dbReference>
<dbReference type="InterPro" id="IPR023764">
    <property type="entry name" value="Tscrpt_reg_HTH_FabR"/>
</dbReference>
<dbReference type="NCBIfam" id="NF008402">
    <property type="entry name" value="PRK11202.1"/>
    <property type="match status" value="1"/>
</dbReference>
<dbReference type="PANTHER" id="PTHR47752">
    <property type="entry name" value="HTH-TYPE TRANSCRIPTIONAL REPRESSOR FABR"/>
    <property type="match status" value="1"/>
</dbReference>
<dbReference type="PANTHER" id="PTHR47752:SF1">
    <property type="entry name" value="HTH-TYPE TRANSCRIPTIONAL REPRESSOR FABR"/>
    <property type="match status" value="1"/>
</dbReference>
<dbReference type="Pfam" id="PF21943">
    <property type="entry name" value="TetR_C_46"/>
    <property type="match status" value="1"/>
</dbReference>
<dbReference type="Pfam" id="PF00440">
    <property type="entry name" value="TetR_N"/>
    <property type="match status" value="1"/>
</dbReference>
<dbReference type="SUPFAM" id="SSF46689">
    <property type="entry name" value="Homeodomain-like"/>
    <property type="match status" value="1"/>
</dbReference>
<dbReference type="PROSITE" id="PS50977">
    <property type="entry name" value="HTH_TETR_2"/>
    <property type="match status" value="1"/>
</dbReference>
<protein>
    <recommendedName>
        <fullName evidence="1">HTH-type transcriptional repressor FabR</fullName>
    </recommendedName>
</protein>
<gene>
    <name evidence="1" type="primary">fabR</name>
    <name type="ordered locus">CKO_03029</name>
</gene>
<feature type="chain" id="PRO_1000065867" description="HTH-type transcriptional repressor FabR">
    <location>
        <begin position="1"/>
        <end position="210"/>
    </location>
</feature>
<feature type="domain" description="HTH tetR-type" evidence="1">
    <location>
        <begin position="10"/>
        <end position="70"/>
    </location>
</feature>
<feature type="DNA-binding region" description="H-T-H motif" evidence="1">
    <location>
        <begin position="33"/>
        <end position="52"/>
    </location>
</feature>
<sequence>MGVRAQQKEKTRRSLVEAAFSQLSAERSFASLSLREVAREAGIAPTSFYRHFRDVDELGLTMVDESGLMLRQLMRQARQRIAKGGSVIRTSVSTFMEFIGNNPNAFRLLLRERSGTSAAFRAAVAREIQHFIAELADYLELENHMPRAFTEAQAEAMVTIVFSAGAEALDVGAEQRRQLEERLVLQLRMIAKGAYYWYRREQEKMAHHSE</sequence>
<comment type="function">
    <text evidence="1">Represses the transcription of fabB, involved in unsaturated fatty acid (UFA) biosynthesis. By controlling UFA production, FabR directly influences the physical properties of the membrane bilayer.</text>
</comment>
<comment type="subunit">
    <text evidence="1">Homodimer.</text>
</comment>
<comment type="subcellular location">
    <subcellularLocation>
        <location evidence="1">Cytoplasm</location>
    </subcellularLocation>
</comment>